<feature type="chain" id="PRO_0000311167" description="RNA-directed RNA polymerase catalytic subunit">
    <location>
        <begin position="1"/>
        <end position="753" status="greater than"/>
    </location>
</feature>
<feature type="domain" description="RdRp catalytic" evidence="1">
    <location>
        <begin position="286"/>
        <end position="483"/>
    </location>
</feature>
<feature type="region of interest" description="Disordered" evidence="2">
    <location>
        <begin position="52"/>
        <end position="82"/>
    </location>
</feature>
<feature type="region of interest" description="Promoter-binding site" evidence="1">
    <location>
        <begin position="249"/>
        <end position="256"/>
    </location>
</feature>
<feature type="short sequence motif" description="Nuclear localization signal" evidence="1">
    <location>
        <begin position="187"/>
        <end position="195"/>
    </location>
</feature>
<feature type="short sequence motif" description="Nuclear localization signal" evidence="1">
    <location>
        <begin position="203"/>
        <end position="216"/>
    </location>
</feature>
<feature type="compositionally biased region" description="Polar residues" evidence="2">
    <location>
        <begin position="55"/>
        <end position="64"/>
    </location>
</feature>
<feature type="non-terminal residue">
    <location>
        <position position="753"/>
    </location>
</feature>
<protein>
    <recommendedName>
        <fullName evidence="1">RNA-directed RNA polymerase catalytic subunit</fullName>
        <ecNumber evidence="1">2.7.7.48</ecNumber>
    </recommendedName>
    <alternativeName>
        <fullName evidence="1">Polymerase basic protein 1</fullName>
        <shortName evidence="1">PB1</shortName>
    </alternativeName>
    <alternativeName>
        <fullName evidence="1">RNA-directed RNA polymerase subunit P1</fullName>
    </alternativeName>
</protein>
<organism>
    <name type="scientific">Influenza A virus (strain A/Chicken/Hong Kong/96.1/2002 H5N1 genotype Y)</name>
    <dbReference type="NCBI Taxonomy" id="279803"/>
    <lineage>
        <taxon>Viruses</taxon>
        <taxon>Riboviria</taxon>
        <taxon>Orthornavirae</taxon>
        <taxon>Negarnaviricota</taxon>
        <taxon>Polyploviricotina</taxon>
        <taxon>Insthoviricetes</taxon>
        <taxon>Articulavirales</taxon>
        <taxon>Orthomyxoviridae</taxon>
        <taxon>Alphainfluenzavirus</taxon>
        <taxon>Alphainfluenzavirus influenzae</taxon>
        <taxon>Influenza A virus</taxon>
    </lineage>
</organism>
<evidence type="ECO:0000255" key="1">
    <source>
        <dbReference type="HAMAP-Rule" id="MF_04065"/>
    </source>
</evidence>
<evidence type="ECO:0000256" key="2">
    <source>
        <dbReference type="SAM" id="MobiDB-lite"/>
    </source>
</evidence>
<name>RDRP_I02A5</name>
<keyword id="KW-1262">Eukaryotic host gene expression shutoff by virus</keyword>
<keyword id="KW-1191">Eukaryotic host transcription shutoff by virus</keyword>
<keyword id="KW-1035">Host cytoplasm</keyword>
<keyword id="KW-1190">Host gene expression shutoff by virus</keyword>
<keyword id="KW-1048">Host nucleus</keyword>
<keyword id="KW-0945">Host-virus interaction</keyword>
<keyword id="KW-1104">Inhibition of host RNA polymerase II by virus</keyword>
<keyword id="KW-0547">Nucleotide-binding</keyword>
<keyword id="KW-0548">Nucleotidyltransferase</keyword>
<keyword id="KW-0597">Phosphoprotein</keyword>
<keyword id="KW-0696">RNA-directed RNA polymerase</keyword>
<keyword id="KW-0808">Transferase</keyword>
<keyword id="KW-0693">Viral RNA replication</keyword>
<keyword id="KW-1195">Viral transcription</keyword>
<comment type="function">
    <text evidence="1">RNA-dependent RNA polymerase which is responsible for replication and transcription of virus RNA segments. The transcription of viral mRNAs occurs by a unique mechanism called cap-snatching. 5' methylated caps of cellular mRNAs are cleaved after 10-13 nucleotides by PA. In turn, these short capped RNAs are used as primers by PB1 for transcription of viral mRNAs. During virus replication, PB1 initiates RNA synthesis and copy vRNA into complementary RNA (cRNA) which in turn serves as a template for the production of more vRNAs.</text>
</comment>
<comment type="catalytic activity">
    <reaction evidence="1">
        <text>RNA(n) + a ribonucleoside 5'-triphosphate = RNA(n+1) + diphosphate</text>
        <dbReference type="Rhea" id="RHEA:21248"/>
        <dbReference type="Rhea" id="RHEA-COMP:14527"/>
        <dbReference type="Rhea" id="RHEA-COMP:17342"/>
        <dbReference type="ChEBI" id="CHEBI:33019"/>
        <dbReference type="ChEBI" id="CHEBI:61557"/>
        <dbReference type="ChEBI" id="CHEBI:140395"/>
        <dbReference type="EC" id="2.7.7.48"/>
    </reaction>
</comment>
<comment type="subunit">
    <text evidence="1">Influenza RNA polymerase is composed of three subunits: PB1, PB2 and PA. Interacts (via N-terminus) with PA (via C-terminus). Interacts (via C-terminus) with PB2 (via N-terminus); this interaction is essential for transcription initiation.</text>
</comment>
<comment type="subcellular location">
    <subcellularLocation>
        <location evidence="1">Host nucleus</location>
    </subcellularLocation>
    <subcellularLocation>
        <location evidence="1">Host cytoplasm</location>
    </subcellularLocation>
</comment>
<comment type="PTM">
    <text evidence="1">Phosphorylated by host PRKCA.</text>
</comment>
<comment type="similarity">
    <text evidence="1">Belongs to the influenza viruses polymerase PB1 family.</text>
</comment>
<organismHost>
    <name type="scientific">Aves</name>
    <dbReference type="NCBI Taxonomy" id="8782"/>
</organismHost>
<organismHost>
    <name type="scientific">Felis catus</name>
    <name type="common">Cat</name>
    <name type="synonym">Felis silvestris catus</name>
    <dbReference type="NCBI Taxonomy" id="9685"/>
</organismHost>
<organismHost>
    <name type="scientific">Homo sapiens</name>
    <name type="common">Human</name>
    <dbReference type="NCBI Taxonomy" id="9606"/>
</organismHost>
<organismHost>
    <name type="scientific">Panthera pardus</name>
    <name type="common">Leopard</name>
    <name type="synonym">Felis pardus</name>
    <dbReference type="NCBI Taxonomy" id="9691"/>
</organismHost>
<organismHost>
    <name type="scientific">Panthera tigris</name>
    <name type="common">Tiger</name>
    <dbReference type="NCBI Taxonomy" id="9694"/>
</organismHost>
<organismHost>
    <name type="scientific">Sus scrofa</name>
    <name type="common">Pig</name>
    <dbReference type="NCBI Taxonomy" id="9823"/>
</organismHost>
<gene>
    <name evidence="1" type="primary">PB1</name>
</gene>
<reference key="1">
    <citation type="journal article" date="2004" name="Proc. Natl. Acad. Sci. U.S.A.">
        <title>H5N1 influenza: a protean pandemic threat.</title>
        <authorList>
            <person name="Guan Y."/>
            <person name="Poon L.L.M."/>
            <person name="Cheung C.Y."/>
            <person name="Ellis T.M."/>
            <person name="Lim W."/>
            <person name="Lipatov A.S."/>
            <person name="Chan K.H."/>
            <person name="Sturm-Ramirez K.M."/>
            <person name="Cheung C.L."/>
            <person name="Leung Y.H.C."/>
            <person name="Yuen K.Y."/>
            <person name="Webster R.G."/>
            <person name="Peiris J.S.M."/>
        </authorList>
    </citation>
    <scope>NUCLEOTIDE SEQUENCE [GENOMIC RNA]</scope>
</reference>
<reference key="2">
    <citation type="submission" date="2008-03" db="EMBL/GenBank/DDBJ databases">
        <authorList>
            <person name="Guan Y."/>
            <person name="Poon L.L.M."/>
            <person name="Cheung C.Y."/>
            <person name="Ellis T.M."/>
            <person name="Lim W."/>
            <person name="Lipatov A.S."/>
            <person name="Chan K.H."/>
            <person name="Sturm-Ramirez K.M."/>
            <person name="Cheung C.L."/>
            <person name="Leung Y.H.C."/>
            <person name="Yuen K.Y."/>
            <person name="Webster R.G."/>
            <person name="Peiris J.S.M."/>
        </authorList>
    </citation>
    <scope>SEQUENCE REVISION</scope>
</reference>
<accession>Q6J847</accession>
<sequence>MDVNPTLLFLKVPVQNAISTTFPYTGDPPYSHGTGTGYTMDTVNRTHQYSEKGKWTTNTETGAPQLNPIDGPLPEDNEPSGYAQTDCVLEAMAFLEESHPGIFENSCLETMEIVQQTRVDKLTQGRQTYDWTLNRNQPAATALANTIEIFRSNGLTANESGRLIDFLKDVMESMDKEEMEITTHFQRKRRVRDNMTKKMVTQRTIGKKKQRLNKKSYLIRALTLNTMTKDAERGKLKRRAIATPGMQIRGFVYFVETLARSICEKLEQSGLPVGGNEKKAKLANVVRKMMTNSQDTELSFTITGDNTKWNENQNPRMFLAMITYITRNQPEWFRNVLSIAPIMFSNKMARLGKGYMFESKSMKLRTQIPAEMLANIDLKYFNELTKKKIEKIRPLLIDGTASLSPGMMMGMFNMLSTVLGVSILNLGQKRYTKTTYWWDGLQSSDDFALIVNAPNHEGIQAGVDRFYRTCKLVGINMSKKKSYINRTGTFEFTSFFYRYGFVANFRMELPSFGVSGINESADMSIGVTVIKNNMINNDLGPATAQMALQLFIKDYRYTYRCHRGDTQIQTRRSFELKKLWEQTRSKAGLLVSDGGPNLYNIRNLHIPEVCLKWELMDEDYQGRLCNPLNPFVSHKEIESVNNAVVMPAHGPAKSMEYDAVATTHSWIPKRNRSILNTSQRGILEDEQMYQKCCNLFEKFFPSSSYRRPVGISSMVEAMVSRARIDARIDFESGRIKKEEFAEIMKICSTIEEL</sequence>
<proteinExistence type="inferred from homology"/>
<dbReference type="EC" id="2.7.7.48" evidence="1"/>
<dbReference type="EMBL" id="AY576401">
    <property type="protein sequence ID" value="AAT39050.2"/>
    <property type="molecule type" value="Genomic_DNA"/>
</dbReference>
<dbReference type="SMR" id="Q6J847"/>
<dbReference type="GO" id="GO:0030430">
    <property type="term" value="C:host cell cytoplasm"/>
    <property type="evidence" value="ECO:0007669"/>
    <property type="project" value="UniProtKB-SubCell"/>
</dbReference>
<dbReference type="GO" id="GO:0042025">
    <property type="term" value="C:host cell nucleus"/>
    <property type="evidence" value="ECO:0007669"/>
    <property type="project" value="UniProtKB-SubCell"/>
</dbReference>
<dbReference type="GO" id="GO:0000166">
    <property type="term" value="F:nucleotide binding"/>
    <property type="evidence" value="ECO:0007669"/>
    <property type="project" value="UniProtKB-KW"/>
</dbReference>
<dbReference type="GO" id="GO:0003723">
    <property type="term" value="F:RNA binding"/>
    <property type="evidence" value="ECO:0007669"/>
    <property type="project" value="InterPro"/>
</dbReference>
<dbReference type="GO" id="GO:0003968">
    <property type="term" value="F:RNA-directed RNA polymerase activity"/>
    <property type="evidence" value="ECO:0007669"/>
    <property type="project" value="UniProtKB-KW"/>
</dbReference>
<dbReference type="GO" id="GO:0039657">
    <property type="term" value="P:symbiont-mediated suppression of host gene expression"/>
    <property type="evidence" value="ECO:0007669"/>
    <property type="project" value="UniProtKB-KW"/>
</dbReference>
<dbReference type="GO" id="GO:0039523">
    <property type="term" value="P:symbiont-mediated suppression of host mRNA transcription via inhibition of RNA polymerase II activity"/>
    <property type="evidence" value="ECO:0007669"/>
    <property type="project" value="UniProtKB-KW"/>
</dbReference>
<dbReference type="GO" id="GO:0039694">
    <property type="term" value="P:viral RNA genome replication"/>
    <property type="evidence" value="ECO:0007669"/>
    <property type="project" value="InterPro"/>
</dbReference>
<dbReference type="GO" id="GO:0019083">
    <property type="term" value="P:viral transcription"/>
    <property type="evidence" value="ECO:0007669"/>
    <property type="project" value="UniProtKB-KW"/>
</dbReference>
<dbReference type="Gene3D" id="6.10.140.720">
    <property type="match status" value="1"/>
</dbReference>
<dbReference type="HAMAP" id="MF_04065">
    <property type="entry name" value="INFV_RDRP"/>
    <property type="match status" value="1"/>
</dbReference>
<dbReference type="InterPro" id="IPR007099">
    <property type="entry name" value="RNA-dir_pol_NSvirus"/>
</dbReference>
<dbReference type="InterPro" id="IPR001407">
    <property type="entry name" value="RNA_pol_PB1_influenza"/>
</dbReference>
<dbReference type="Pfam" id="PF00602">
    <property type="entry name" value="Flu_PB1"/>
    <property type="match status" value="1"/>
</dbReference>
<dbReference type="PIRSF" id="PIRSF000827">
    <property type="entry name" value="RdRPol_OMV"/>
    <property type="match status" value="1"/>
</dbReference>
<dbReference type="PROSITE" id="PS50525">
    <property type="entry name" value="RDRP_SSRNA_NEG_SEG"/>
    <property type="match status" value="1"/>
</dbReference>